<comment type="function">
    <text evidence="2">Antagonist of L-type calcium channels (Cav1/CACNA1). In vivo, causes paralysis in posterior limbs, and gradual decrease in movement and aggression during 24 hours after intracerebroventricular injection in mice at dose levels of 3 ug per mouse.</text>
</comment>
<comment type="subcellular location">
    <subcellularLocation>
        <location evidence="1">Secreted</location>
    </subcellularLocation>
</comment>
<comment type="tissue specificity">
    <text evidence="5">Expressed by the venom gland.</text>
</comment>
<comment type="domain">
    <text evidence="4">The presence of a 'disulfide through disulfide knot' structurally defines this protein as a knottin.</text>
</comment>
<comment type="mass spectrometry"/>
<comment type="similarity">
    <text evidence="4">Belongs to the neurotoxin 09 (Tx3-6) family.</text>
</comment>
<keyword id="KW-0108">Calcium channel impairing toxin</keyword>
<keyword id="KW-0903">Direct protein sequencing</keyword>
<keyword id="KW-1015">Disulfide bond</keyword>
<keyword id="KW-0872">Ion channel impairing toxin</keyword>
<keyword id="KW-0960">Knottin</keyword>
<keyword id="KW-0528">Neurotoxin</keyword>
<keyword id="KW-0964">Secreted</keyword>
<keyword id="KW-0800">Toxin</keyword>
<keyword id="KW-1218">Voltage-gated calcium channel impairing toxin</keyword>
<protein>
    <recommendedName>
        <fullName evidence="4">Omega-ctenitoxin-Pr2a</fullName>
        <shortName evidence="4">Omega-CNTX-Pr2a</shortName>
    </recommendedName>
    <alternativeName>
        <fullName evidence="3">Neurotoxin PRTx23C2</fullName>
    </alternativeName>
</protein>
<accession>P84014</accession>
<proteinExistence type="evidence at protein level"/>
<evidence type="ECO:0000269" key="1">
    <source>
    </source>
</evidence>
<evidence type="ECO:0000269" key="2">
    <source ref="2"/>
</evidence>
<evidence type="ECO:0000303" key="3">
    <source ref="2"/>
</evidence>
<evidence type="ECO:0000305" key="4"/>
<evidence type="ECO:0000305" key="5">
    <source>
    </source>
</evidence>
<feature type="chain" id="PRO_0000087637" description="Omega-ctenitoxin-Pr2a" evidence="1">
    <location>
        <begin position="1"/>
        <end position="55"/>
    </location>
</feature>
<feature type="disulfide bond" evidence="4">
    <location>
        <begin position="2"/>
        <end position="16"/>
    </location>
</feature>
<feature type="disulfide bond" evidence="4">
    <location>
        <begin position="9"/>
        <end position="22"/>
    </location>
</feature>
<feature type="disulfide bond" evidence="4">
    <location>
        <begin position="15"/>
        <end position="37"/>
    </location>
</feature>
<feature type="disulfide bond" evidence="4">
    <location>
        <begin position="24"/>
        <end position="35"/>
    </location>
</feature>
<feature type="disulfide bond" evidence="4">
    <location>
        <begin position="45"/>
        <end position="52"/>
    </location>
</feature>
<organism>
    <name type="scientific">Phoneutria reidyi</name>
    <name type="common">Brazilian Amazonian armed spider</name>
    <name type="synonym">Ctenus reidyi</name>
    <dbReference type="NCBI Taxonomy" id="272752"/>
    <lineage>
        <taxon>Eukaryota</taxon>
        <taxon>Metazoa</taxon>
        <taxon>Ecdysozoa</taxon>
        <taxon>Arthropoda</taxon>
        <taxon>Chelicerata</taxon>
        <taxon>Arachnida</taxon>
        <taxon>Araneae</taxon>
        <taxon>Araneomorphae</taxon>
        <taxon>Entelegynae</taxon>
        <taxon>Lycosoidea</taxon>
        <taxon>Ctenidae</taxon>
        <taxon>Phoneutria</taxon>
    </lineage>
</organism>
<reference key="1">
    <citation type="journal article" date="2006" name="Comp. Biochem. Physiol.">
        <title>Comparison of the partial proteomes of the venoms of Brazilian spiders of the genus Phoneutria.</title>
        <authorList>
            <person name="Richardson M."/>
            <person name="Pimenta A.M."/>
            <person name="Bemquerer M.P."/>
            <person name="Santoro M.M."/>
            <person name="Beirao P.S."/>
            <person name="Lima M.E."/>
            <person name="Figueiredo S.G."/>
            <person name="Bloch C. Jr."/>
            <person name="Vasconcelos E.A."/>
            <person name="Campos F.A."/>
            <person name="Gomes P.C."/>
            <person name="Cordeiro M.N."/>
        </authorList>
    </citation>
    <scope>PROTEIN SEQUENCE</scope>
    <scope>SUBCELLULAR LOCATION</scope>
    <scope>MASS SPECTROMETRY</scope>
    <source>
        <tissue>Venom</tissue>
    </source>
</reference>
<reference key="2">
    <citation type="submission" date="2004-06" db="UniProtKB">
        <title>Protein PRTx23C2 from venom of Brazilian Amazonian armed spider Phoneutria reidyi has sequence similarity with toxin Tx3-6 from the related spider Phoneutria nigriventer and other spider toxins.</title>
        <authorList>
            <person name="Richardson M."/>
            <person name="Pimenta A.M.C."/>
            <person name="Bemquerer M.P."/>
            <person name="Santoro M.M."/>
            <person name="Figueiredo S.G."/>
            <person name="Cordeiro M.N."/>
        </authorList>
    </citation>
    <scope>FUNCTION</scope>
</reference>
<sequence>ACIPRGEICTDDCECCGCDNECYCPIGSSLGIFKCSCAHANKYFCNRKKEKCKKA</sequence>
<dbReference type="SMR" id="P84014"/>
<dbReference type="ArachnoServer" id="AS000239">
    <property type="toxin name" value="omega-ctenitoxin-Pr2a"/>
</dbReference>
<dbReference type="GO" id="GO:0005576">
    <property type="term" value="C:extracellular region"/>
    <property type="evidence" value="ECO:0007669"/>
    <property type="project" value="UniProtKB-SubCell"/>
</dbReference>
<dbReference type="GO" id="GO:0005246">
    <property type="term" value="F:calcium channel regulator activity"/>
    <property type="evidence" value="ECO:0007669"/>
    <property type="project" value="UniProtKB-KW"/>
</dbReference>
<dbReference type="GO" id="GO:0090729">
    <property type="term" value="F:toxin activity"/>
    <property type="evidence" value="ECO:0007669"/>
    <property type="project" value="UniProtKB-KW"/>
</dbReference>
<name>TX90A_PHORI</name>